<protein>
    <recommendedName>
        <fullName>Extracellular matrix protein A</fullName>
    </recommendedName>
    <alternativeName>
        <fullName>Extracellular matrix protein ST430</fullName>
    </alternativeName>
</protein>
<comment type="subcellular location">
    <subcellularLocation>
        <location evidence="3">Secreted</location>
    </subcellularLocation>
</comment>
<comment type="induction">
    <text evidence="2">Induced by the putative stalk-specific morphogen DIF (differentiation inducing factor).</text>
</comment>
<name>ECMA_DICDI</name>
<keyword id="KW-0325">Glycoprotein</keyword>
<keyword id="KW-1185">Reference proteome</keyword>
<keyword id="KW-0677">Repeat</keyword>
<keyword id="KW-0964">Secreted</keyword>
<keyword id="KW-0732">Signal</keyword>
<sequence length="1710" mass="177830">MKISIFILLLFISSMVIISVNAETETIQTNTACDCDDDCDDGNRWSTDMCSAGLLFGKYCTHTQICCDDENACTIDSCSKTSGCVHTPINVDDKNPCTIDSCIKGFISHTQISCDDKNACTIDSCDCSSGCQNKPMSCDDNNPCTVDSCNNSTGCRNTPISVDDNNPCTIDSCSKSTGVVHIPINVDDLNPCTIDACTKEGGVTHTPVNVDDNNKCTTDSCSLFTGITHTEICCDDNNACTDDSCSPSTGCVNTPISCDDKNPCTVDSCNNSTGCCYTPINVDDNNPCTIDACTKSTGVTHTPINVDDNNQCTTDSCTKEGGVTHTPVNTDDNNPCTVDSCSPFTGVSHTPINVDDNNKCTIDACTKEGGVTHTPVNTDDNNACTLDSCSPLTGVTHTPINCDDKKACTVDSCSNSTGCVNTPISCDDNNPCTVDTCDDSTGCCNTPINVDDNNPCTVDACTKSTGVTHTPVNVDDNNKCTIDACTKEGGVTHTPVNTDDNNACTLDNCSPLTGVTHTPINCDDKKACTVDSCSNSTGCVNTPISCDDNNPCTVDSCDDITGCCNTPINVDDNNPCTVDACTKSTGVTHTPVNVDDNNKCTIDACTKEGGVTHTPVNTDDNNACTLDSCSPSTGVSHTPINCDDSNPCTVDSCSNSTGCVNTPVNVDDNNPCTVDACTKSTGVTHTPVNVDDNNKCTIDACTKEGGVTHTPVNTDDNNACTIDSCSPSTGISHTPINCDDKKACTVDSCSNSTGCVNTPISCDDNNPCTVDSCDDLTGCCNTPINVDDNNPCTIDACTKSTGVTHTPVNVDDNNKCTIDTCTKEGGVTHTPVNTDDNNACTLDSCSPSTGVSHTPINCDDNNKCTVDSCSNSTGCVNTPINCDDSNPCTVDSCNNSTGCVNTPVNVDDNNPCTVDACTKSTGVTHTPVNVDDNNKCTIDACTKEGGVTHTPVNTDDNNACTIDACTKEGGVTHTPVNTDDNNACTLDSCSPSTGVSHTPINCDDSNPCTVDSCSNSTGCCNTPINVDDNNPCTVDSCTKPTGVTHTPVNVDDNNKCTIDACTKEGGVTHTPVNTDDNNACTLDSCSPSTGISHAPINCDDSNPCTIDSCNNSTGCCNTPINVDDNNPCTVDSCTKSGGVTHTPVNVDDNNKCTTDACTKEGGVTHTPISCDDNNACTIDSCSNSTGCVNTPISCDDRNPCTVDTCTKEKGCQHSPIDTDDSNKCTIDACSSTTGVTHTSINCDDNNACTFDSCSNSTGCVSTPISCDDKNPCTLDSCDKKTGCCNTPINVDDNDKCTTDSCTKEGGVTHTPISCDDNNACTTDSCSKSTGCVNKPISCDDSNPCTVDSCSNSTGCCNTPINVDDNNPCTTDSCTKSGGVTHTPVNVDDNNKCTTDSCTKEGGITHTPISCDDNNPCTLDSCSPTTGCVNKPMNVDDNDACTTDTCNKDGTITHTPINTDDNNKCTLDACSPKTGVTHTPINCDDGNKCTINSCSPSVGCISTPVSCPKPKDKCSISQCDSAKGCIEVPMNCTSDKCNEASCCDGVCTSKPISCPKPKNKCQVAKCDLIKGCTVSNVVCDDGNACTEDSCCSDTGKCQFEPIKLPKNKNKCIISKCDPIKGTITNSTVNCECDDLCNIGECCEDTGKCNYRQKDCDDNNPKTADSCDSKTGKCINKPYNVITSGSNLISGLIGGLIGGGTGGKGDCKTCKN</sequence>
<dbReference type="EMBL" id="AAFI02000023">
    <property type="protein sequence ID" value="EAL68099.1"/>
    <property type="molecule type" value="Genomic_DNA"/>
</dbReference>
<dbReference type="RefSeq" id="XP_642240.1">
    <property type="nucleotide sequence ID" value="XM_637148.1"/>
</dbReference>
<dbReference type="FunCoup" id="Q54YG2">
    <property type="interactions" value="46"/>
</dbReference>
<dbReference type="STRING" id="44689.Q54YG2"/>
<dbReference type="GlyCosmos" id="Q54YG2">
    <property type="glycosylation" value="19 sites, No reported glycans"/>
</dbReference>
<dbReference type="GlyGen" id="Q54YG2">
    <property type="glycosylation" value="19 sites"/>
</dbReference>
<dbReference type="PaxDb" id="44689-DDB0220137"/>
<dbReference type="EnsemblProtists" id="EAL68099">
    <property type="protein sequence ID" value="EAL68099"/>
    <property type="gene ID" value="DDB_G0277853"/>
</dbReference>
<dbReference type="GeneID" id="8621449"/>
<dbReference type="KEGG" id="ddi:DDB_G0277853"/>
<dbReference type="dictyBase" id="DDB_G0277853">
    <property type="gene designation" value="ecmA"/>
</dbReference>
<dbReference type="VEuPathDB" id="AmoebaDB:DDB_G0277853"/>
<dbReference type="eggNOG" id="ENOG502RSRD">
    <property type="taxonomic scope" value="Eukaryota"/>
</dbReference>
<dbReference type="HOGENOM" id="CLU_240605_0_0_1"/>
<dbReference type="InParanoid" id="Q54YG2"/>
<dbReference type="OMA" id="DTDCNAC"/>
<dbReference type="PhylomeDB" id="Q54YG2"/>
<dbReference type="PRO" id="PR:Q54YG2"/>
<dbReference type="Proteomes" id="UP000002195">
    <property type="component" value="Chromosome 3"/>
</dbReference>
<dbReference type="GO" id="GO:0031012">
    <property type="term" value="C:extracellular matrix"/>
    <property type="evidence" value="ECO:0007005"/>
    <property type="project" value="dictyBase"/>
</dbReference>
<dbReference type="GO" id="GO:0005576">
    <property type="term" value="C:extracellular region"/>
    <property type="evidence" value="ECO:0000318"/>
    <property type="project" value="GO_Central"/>
</dbReference>
<dbReference type="GO" id="GO:0005198">
    <property type="term" value="F:structural molecule activity"/>
    <property type="evidence" value="ECO:0000304"/>
    <property type="project" value="dictyBase"/>
</dbReference>
<dbReference type="GO" id="GO:0031154">
    <property type="term" value="P:culmination involved in sorocarp development"/>
    <property type="evidence" value="ECO:0000270"/>
    <property type="project" value="dictyBase"/>
</dbReference>
<dbReference type="GO" id="GO:0030198">
    <property type="term" value="P:extracellular matrix organization"/>
    <property type="evidence" value="ECO:0000304"/>
    <property type="project" value="dictyBase"/>
</dbReference>
<dbReference type="GO" id="GO:1902168">
    <property type="term" value="P:response to catechin"/>
    <property type="evidence" value="ECO:0000314"/>
    <property type="project" value="dictyBase"/>
</dbReference>
<dbReference type="GO" id="GO:0099120">
    <property type="term" value="P:socially cooperative development"/>
    <property type="evidence" value="ECO:0000314"/>
    <property type="project" value="dictyBase"/>
</dbReference>
<dbReference type="InterPro" id="IPR052846">
    <property type="entry name" value="ECM-enzyme_regulator"/>
</dbReference>
<dbReference type="InterPro" id="IPR001673">
    <property type="entry name" value="S_mold_repeat"/>
</dbReference>
<dbReference type="PANTHER" id="PTHR31797:SF8">
    <property type="entry name" value="EXTRACELLULAR MATRIX PROTEIN A"/>
    <property type="match status" value="1"/>
</dbReference>
<dbReference type="PANTHER" id="PTHR31797">
    <property type="entry name" value="EXTRACELLULAR MATRIX PROTEIN A-RELATED"/>
    <property type="match status" value="1"/>
</dbReference>
<dbReference type="Pfam" id="PF00526">
    <property type="entry name" value="Dicty_CTDC"/>
    <property type="match status" value="63"/>
</dbReference>
<gene>
    <name type="primary">ecmA</name>
    <name type="synonym">Dd63</name>
    <name type="ORF">DDB_G0277853</name>
</gene>
<reference key="1">
    <citation type="journal article" date="2005" name="Nature">
        <title>The genome of the social amoeba Dictyostelium discoideum.</title>
        <authorList>
            <person name="Eichinger L."/>
            <person name="Pachebat J.A."/>
            <person name="Gloeckner G."/>
            <person name="Rajandream M.A."/>
            <person name="Sucgang R."/>
            <person name="Berriman M."/>
            <person name="Song J."/>
            <person name="Olsen R."/>
            <person name="Szafranski K."/>
            <person name="Xu Q."/>
            <person name="Tunggal B."/>
            <person name="Kummerfeld S."/>
            <person name="Madera M."/>
            <person name="Konfortov B.A."/>
            <person name="Rivero F."/>
            <person name="Bankier A.T."/>
            <person name="Lehmann R."/>
            <person name="Hamlin N."/>
            <person name="Davies R."/>
            <person name="Gaudet P."/>
            <person name="Fey P."/>
            <person name="Pilcher K."/>
            <person name="Chen G."/>
            <person name="Saunders D."/>
            <person name="Sodergren E.J."/>
            <person name="Davis P."/>
            <person name="Kerhornou A."/>
            <person name="Nie X."/>
            <person name="Hall N."/>
            <person name="Anjard C."/>
            <person name="Hemphill L."/>
            <person name="Bason N."/>
            <person name="Farbrother P."/>
            <person name="Desany B."/>
            <person name="Just E."/>
            <person name="Morio T."/>
            <person name="Rost R."/>
            <person name="Churcher C.M."/>
            <person name="Cooper J."/>
            <person name="Haydock S."/>
            <person name="van Driessche N."/>
            <person name="Cronin A."/>
            <person name="Goodhead I."/>
            <person name="Muzny D.M."/>
            <person name="Mourier T."/>
            <person name="Pain A."/>
            <person name="Lu M."/>
            <person name="Harper D."/>
            <person name="Lindsay R."/>
            <person name="Hauser H."/>
            <person name="James K.D."/>
            <person name="Quiles M."/>
            <person name="Madan Babu M."/>
            <person name="Saito T."/>
            <person name="Buchrieser C."/>
            <person name="Wardroper A."/>
            <person name="Felder M."/>
            <person name="Thangavelu M."/>
            <person name="Johnson D."/>
            <person name="Knights A."/>
            <person name="Loulseged H."/>
            <person name="Mungall K.L."/>
            <person name="Oliver K."/>
            <person name="Price C."/>
            <person name="Quail M.A."/>
            <person name="Urushihara H."/>
            <person name="Hernandez J."/>
            <person name="Rabbinowitsch E."/>
            <person name="Steffen D."/>
            <person name="Sanders M."/>
            <person name="Ma J."/>
            <person name="Kohara Y."/>
            <person name="Sharp S."/>
            <person name="Simmonds M.N."/>
            <person name="Spiegler S."/>
            <person name="Tivey A."/>
            <person name="Sugano S."/>
            <person name="White B."/>
            <person name="Walker D."/>
            <person name="Woodward J.R."/>
            <person name="Winckler T."/>
            <person name="Tanaka Y."/>
            <person name="Shaulsky G."/>
            <person name="Schleicher M."/>
            <person name="Weinstock G.M."/>
            <person name="Rosenthal A."/>
            <person name="Cox E.C."/>
            <person name="Chisholm R.L."/>
            <person name="Gibbs R.A."/>
            <person name="Loomis W.F."/>
            <person name="Platzer M."/>
            <person name="Kay R.R."/>
            <person name="Williams J.G."/>
            <person name="Dear P.H."/>
            <person name="Noegel A.A."/>
            <person name="Barrell B.G."/>
            <person name="Kuspa A."/>
        </authorList>
    </citation>
    <scope>NUCLEOTIDE SEQUENCE [LARGE SCALE GENOMIC DNA]</scope>
    <source>
        <strain>AX4</strain>
    </source>
</reference>
<reference key="2">
    <citation type="journal article" date="2006" name="Differentiation">
        <title>Disruption of the ifkA and ifkB genes results in altered cell adhesion, morphological defects and a propensity to form pre-stalk O cells during development of Dictyostelium.</title>
        <authorList>
            <person name="Rai M."/>
            <person name="Xiong Y."/>
            <person name="Singleton C.K."/>
        </authorList>
    </citation>
    <scope>INDUCTION BY DIF</scope>
</reference>
<proteinExistence type="evidence at transcript level"/>
<accession>Q54YG2</accession>
<evidence type="ECO:0000255" key="1"/>
<evidence type="ECO:0000269" key="2">
    <source>
    </source>
</evidence>
<evidence type="ECO:0000305" key="3"/>
<organism>
    <name type="scientific">Dictyostelium discoideum</name>
    <name type="common">Social amoeba</name>
    <dbReference type="NCBI Taxonomy" id="44689"/>
    <lineage>
        <taxon>Eukaryota</taxon>
        <taxon>Amoebozoa</taxon>
        <taxon>Evosea</taxon>
        <taxon>Eumycetozoa</taxon>
        <taxon>Dictyostelia</taxon>
        <taxon>Dictyosteliales</taxon>
        <taxon>Dictyosteliaceae</taxon>
        <taxon>Dictyostelium</taxon>
    </lineage>
</organism>
<feature type="signal peptide" evidence="1">
    <location>
        <begin position="1"/>
        <end position="22"/>
    </location>
</feature>
<feature type="chain" id="PRO_0000384442" description="Extracellular matrix protein A">
    <location>
        <begin position="23"/>
        <end position="1710"/>
    </location>
</feature>
<feature type="repeat" description="Cys-rich CT 1">
    <location>
        <begin position="43"/>
        <end position="70"/>
    </location>
</feature>
<feature type="repeat" description="Cys-rich CT 2">
    <location>
        <begin position="71"/>
        <end position="94"/>
    </location>
</feature>
<feature type="repeat" description="Cys-rich CT 3">
    <location>
        <begin position="95"/>
        <end position="117"/>
    </location>
</feature>
<feature type="repeat" description="Cys-rich CT 4">
    <location>
        <begin position="118"/>
        <end position="141"/>
    </location>
</feature>
<feature type="repeat" description="Cys-rich CT 5">
    <location>
        <begin position="142"/>
        <end position="165"/>
    </location>
</feature>
<feature type="repeat" description="Cys-rich CT 6">
    <location>
        <begin position="166"/>
        <end position="189"/>
    </location>
</feature>
<feature type="repeat" description="Cys-rich CT 7">
    <location>
        <begin position="190"/>
        <end position="213"/>
    </location>
</feature>
<feature type="repeat" description="Cys-rich CT 8">
    <location>
        <begin position="214"/>
        <end position="237"/>
    </location>
</feature>
<feature type="repeat" description="Cys-rich CT 9">
    <location>
        <begin position="238"/>
        <end position="261"/>
    </location>
</feature>
<feature type="repeat" description="Cys-rich CT 10">
    <location>
        <begin position="262"/>
        <end position="285"/>
    </location>
</feature>
<feature type="repeat" description="Cys-rich CT 11">
    <location>
        <begin position="286"/>
        <end position="309"/>
    </location>
</feature>
<feature type="repeat" description="Cys-rich CT 12">
    <location>
        <begin position="310"/>
        <end position="333"/>
    </location>
</feature>
<feature type="repeat" description="Cys-rich CT 13">
    <location>
        <begin position="334"/>
        <end position="357"/>
    </location>
</feature>
<feature type="repeat" description="Cys-rich CT 14">
    <location>
        <begin position="358"/>
        <end position="381"/>
    </location>
</feature>
<feature type="repeat" description="Cys-rich CT 15">
    <location>
        <begin position="382"/>
        <end position="405"/>
    </location>
</feature>
<feature type="repeat" description="Cys-rich CT 16">
    <location>
        <begin position="406"/>
        <end position="429"/>
    </location>
</feature>
<feature type="repeat" description="Cys-rich CT 17">
    <location>
        <begin position="430"/>
        <end position="453"/>
    </location>
</feature>
<feature type="repeat" description="Cys-rich CT 18">
    <location>
        <begin position="454"/>
        <end position="477"/>
    </location>
</feature>
<feature type="repeat" description="Cys-rich CT 19">
    <location>
        <begin position="478"/>
        <end position="501"/>
    </location>
</feature>
<feature type="repeat" description="Cys-rich CT 20">
    <location>
        <begin position="502"/>
        <end position="525"/>
    </location>
</feature>
<feature type="repeat" description="Cys-rich CT 21">
    <location>
        <begin position="526"/>
        <end position="549"/>
    </location>
</feature>
<feature type="repeat" description="Cys-rich CT 22">
    <location>
        <begin position="550"/>
        <end position="573"/>
    </location>
</feature>
<feature type="repeat" description="Cys-rich CT 23">
    <location>
        <begin position="574"/>
        <end position="597"/>
    </location>
</feature>
<feature type="repeat" description="Cys-rich CT 24">
    <location>
        <begin position="598"/>
        <end position="621"/>
    </location>
</feature>
<feature type="repeat" description="Cys-rich CT 25">
    <location>
        <begin position="622"/>
        <end position="645"/>
    </location>
</feature>
<feature type="repeat" description="Cys-rich CT 26">
    <location>
        <begin position="646"/>
        <end position="669"/>
    </location>
</feature>
<feature type="repeat" description="Cys-rich CT 27">
    <location>
        <begin position="670"/>
        <end position="693"/>
    </location>
</feature>
<feature type="repeat" description="Cys-rich CT 28">
    <location>
        <begin position="694"/>
        <end position="717"/>
    </location>
</feature>
<feature type="repeat" description="Cys-rich CT 29">
    <location>
        <begin position="718"/>
        <end position="741"/>
    </location>
</feature>
<feature type="repeat" description="Cys-rich CT 30">
    <location>
        <begin position="742"/>
        <end position="765"/>
    </location>
</feature>
<feature type="repeat" description="Cys-rich CT 31">
    <location>
        <begin position="766"/>
        <end position="789"/>
    </location>
</feature>
<feature type="repeat" description="Cys-rich CT 32">
    <location>
        <begin position="790"/>
        <end position="813"/>
    </location>
</feature>
<feature type="repeat" description="Cys-rich CT 33">
    <location>
        <begin position="814"/>
        <end position="837"/>
    </location>
</feature>
<feature type="repeat" description="Cys-rich CT 34">
    <location>
        <begin position="838"/>
        <end position="861"/>
    </location>
</feature>
<feature type="repeat" description="Cys-rich CT 35">
    <location>
        <begin position="862"/>
        <end position="885"/>
    </location>
</feature>
<feature type="repeat" description="Cys-rich CT 36">
    <location>
        <begin position="886"/>
        <end position="909"/>
    </location>
</feature>
<feature type="repeat" description="Cys-rich CT 37">
    <location>
        <begin position="910"/>
        <end position="933"/>
    </location>
</feature>
<feature type="repeat" description="Cys-rich CT 38">
    <location>
        <begin position="934"/>
        <end position="957"/>
    </location>
</feature>
<feature type="repeat" description="Cys-rich CT 39">
    <location>
        <begin position="958"/>
        <end position="981"/>
    </location>
</feature>
<feature type="repeat" description="Cys-rich CT 40">
    <location>
        <begin position="982"/>
        <end position="1005"/>
    </location>
</feature>
<feature type="repeat" description="Cys-rich CT 41">
    <location>
        <begin position="1006"/>
        <end position="1029"/>
    </location>
</feature>
<feature type="repeat" description="Cys-rich CT 42">
    <location>
        <begin position="1030"/>
        <end position="1053"/>
    </location>
</feature>
<feature type="repeat" description="Cys-rich CT 43">
    <location>
        <begin position="1054"/>
        <end position="1077"/>
    </location>
</feature>
<feature type="repeat" description="Cys-rich CT 44">
    <location>
        <begin position="1078"/>
        <end position="1101"/>
    </location>
</feature>
<feature type="repeat" description="Cys-rich CT 45">
    <location>
        <begin position="1102"/>
        <end position="1125"/>
    </location>
</feature>
<feature type="repeat" description="Cys-rich CT 46">
    <location>
        <begin position="1126"/>
        <end position="1149"/>
    </location>
</feature>
<feature type="repeat" description="Cys-rich CT 47">
    <location>
        <begin position="1150"/>
        <end position="1173"/>
    </location>
</feature>
<feature type="repeat" description="Cys-rich CT 48">
    <location>
        <begin position="1174"/>
        <end position="1197"/>
    </location>
</feature>
<feature type="repeat" description="Cys-rich CT 49">
    <location>
        <begin position="1198"/>
        <end position="1221"/>
    </location>
</feature>
<feature type="repeat" description="Cys-rich CT 50">
    <location>
        <begin position="1222"/>
        <end position="1245"/>
    </location>
</feature>
<feature type="repeat" description="Cys-rich CT 51">
    <location>
        <begin position="1246"/>
        <end position="1269"/>
    </location>
</feature>
<feature type="repeat" description="Cys-rich CT 52">
    <location>
        <begin position="1270"/>
        <end position="1293"/>
    </location>
</feature>
<feature type="repeat" description="Cys-rich CT 53">
    <location>
        <begin position="1294"/>
        <end position="1317"/>
    </location>
</feature>
<feature type="repeat" description="Cys-rich CT 54">
    <location>
        <begin position="1318"/>
        <end position="1341"/>
    </location>
</feature>
<feature type="repeat" description="Cys-rich CT 55">
    <location>
        <begin position="1342"/>
        <end position="1365"/>
    </location>
</feature>
<feature type="repeat" description="Cys-rich CT 56">
    <location>
        <begin position="1366"/>
        <end position="1389"/>
    </location>
</feature>
<feature type="repeat" description="Cys-rich CT 57">
    <location>
        <begin position="1390"/>
        <end position="1413"/>
    </location>
</feature>
<feature type="repeat" description="Cys-rich CT 58">
    <location>
        <begin position="1414"/>
        <end position="1437"/>
    </location>
</feature>
<feature type="repeat" description="Cys-rich CT 59">
    <location>
        <begin position="1438"/>
        <end position="1461"/>
    </location>
</feature>
<feature type="repeat" description="Cys-rich CT 60">
    <location>
        <begin position="1462"/>
        <end position="1485"/>
    </location>
</feature>
<feature type="repeat" description="Cys-rich CT 61">
    <location>
        <begin position="1486"/>
        <end position="1509"/>
    </location>
</feature>
<feature type="repeat" description="Cys-rich CT 62">
    <location>
        <begin position="1511"/>
        <end position="1534"/>
    </location>
</feature>
<feature type="repeat" description="Cys-rich CT 63">
    <location>
        <begin position="1558"/>
        <end position="1581"/>
    </location>
</feature>
<feature type="repeat" description="Cys-rich CT 64">
    <location>
        <begin position="1582"/>
        <end position="1606"/>
    </location>
</feature>
<feature type="repeat" description="Cys-rich CT 65">
    <location>
        <begin position="1608"/>
        <end position="1632"/>
    </location>
</feature>
<feature type="repeat" description="Cys-rich CT 66">
    <location>
        <begin position="1658"/>
        <end position="1682"/>
    </location>
</feature>
<feature type="glycosylation site" description="N-linked (GlcNAc...) asparagine" evidence="1">
    <location>
        <position position="150"/>
    </location>
</feature>
<feature type="glycosylation site" description="N-linked (GlcNAc...) asparagine" evidence="1">
    <location>
        <position position="151"/>
    </location>
</feature>
<feature type="glycosylation site" description="N-linked (GlcNAc...) asparagine" evidence="1">
    <location>
        <position position="270"/>
    </location>
</feature>
<feature type="glycosylation site" description="N-linked (GlcNAc...) asparagine" evidence="1">
    <location>
        <position position="271"/>
    </location>
</feature>
<feature type="glycosylation site" description="N-linked (GlcNAc...) asparagine" evidence="1">
    <location>
        <position position="415"/>
    </location>
</feature>
<feature type="glycosylation site" description="N-linked (GlcNAc...) asparagine" evidence="1">
    <location>
        <position position="535"/>
    </location>
</feature>
<feature type="glycosylation site" description="N-linked (GlcNAc...) asparagine" evidence="1">
    <location>
        <position position="655"/>
    </location>
</feature>
<feature type="glycosylation site" description="N-linked (GlcNAc...) asparagine" evidence="1">
    <location>
        <position position="751"/>
    </location>
</feature>
<feature type="glycosylation site" description="N-linked (GlcNAc...) asparagine" evidence="1">
    <location>
        <position position="871"/>
    </location>
</feature>
<feature type="glycosylation site" description="N-linked (GlcNAc...) asparagine" evidence="1">
    <location>
        <position position="894"/>
    </location>
</feature>
<feature type="glycosylation site" description="N-linked (GlcNAc...) asparagine" evidence="1">
    <location>
        <position position="895"/>
    </location>
</feature>
<feature type="glycosylation site" description="N-linked (GlcNAc...) asparagine" evidence="1">
    <location>
        <position position="1015"/>
    </location>
</feature>
<feature type="glycosylation site" description="N-linked (GlcNAc...) asparagine" evidence="1">
    <location>
        <position position="1110"/>
    </location>
</feature>
<feature type="glycosylation site" description="N-linked (GlcNAc...) asparagine" evidence="1">
    <location>
        <position position="1111"/>
    </location>
</feature>
<feature type="glycosylation site" description="N-linked (GlcNAc...) asparagine" evidence="1">
    <location>
        <position position="1183"/>
    </location>
</feature>
<feature type="glycosylation site" description="N-linked (GlcNAc...) asparagine" evidence="1">
    <location>
        <position position="1255"/>
    </location>
</feature>
<feature type="glycosylation site" description="N-linked (GlcNAc...) asparagine" evidence="1">
    <location>
        <position position="1351"/>
    </location>
</feature>
<feature type="glycosylation site" description="N-linked (GlcNAc...) asparagine" evidence="1">
    <location>
        <position position="1530"/>
    </location>
</feature>
<feature type="glycosylation site" description="N-linked (GlcNAc...) asparagine" evidence="1">
    <location>
        <position position="1624"/>
    </location>
</feature>